<protein>
    <recommendedName>
        <fullName evidence="1">ATP synthase subunit delta</fullName>
    </recommendedName>
    <alternativeName>
        <fullName evidence="1">ATP synthase F(1) sector subunit delta</fullName>
    </alternativeName>
    <alternativeName>
        <fullName evidence="1">F-type ATPase subunit delta</fullName>
        <shortName evidence="1">F-ATPase subunit delta</shortName>
    </alternativeName>
</protein>
<proteinExistence type="evidence at protein level"/>
<dbReference type="EMBL" id="J01594">
    <property type="protein sequence ID" value="AAA24734.1"/>
    <property type="molecule type" value="Genomic_DNA"/>
</dbReference>
<dbReference type="EMBL" id="M12212">
    <property type="protein sequence ID" value="AAA20044.1"/>
    <property type="molecule type" value="Unassigned_DNA"/>
</dbReference>
<dbReference type="EMBL" id="X01631">
    <property type="protein sequence ID" value="CAA25779.1"/>
    <property type="molecule type" value="Genomic_DNA"/>
</dbReference>
<dbReference type="EMBL" id="V00266">
    <property type="protein sequence ID" value="CAA23524.1"/>
    <property type="molecule type" value="Genomic_DNA"/>
</dbReference>
<dbReference type="EMBL" id="V00264">
    <property type="protein sequence ID" value="CAA23517.1"/>
    <property type="molecule type" value="Genomic_DNA"/>
</dbReference>
<dbReference type="EMBL" id="M25464">
    <property type="protein sequence ID" value="AAA83872.1"/>
    <property type="molecule type" value="Genomic_DNA"/>
</dbReference>
<dbReference type="EMBL" id="L10328">
    <property type="protein sequence ID" value="AAA62087.1"/>
    <property type="molecule type" value="Genomic_DNA"/>
</dbReference>
<dbReference type="EMBL" id="U00096">
    <property type="protein sequence ID" value="AAC76758.1"/>
    <property type="molecule type" value="Genomic_DNA"/>
</dbReference>
<dbReference type="EMBL" id="AP009048">
    <property type="protein sequence ID" value="BAE77553.1"/>
    <property type="molecule type" value="Genomic_DNA"/>
</dbReference>
<dbReference type="PIR" id="A93732">
    <property type="entry name" value="PWECD"/>
</dbReference>
<dbReference type="RefSeq" id="NP_418191.1">
    <property type="nucleotide sequence ID" value="NC_000913.3"/>
</dbReference>
<dbReference type="RefSeq" id="WP_001288587.1">
    <property type="nucleotide sequence ID" value="NZ_STEB01000015.1"/>
</dbReference>
<dbReference type="PDB" id="1ABV">
    <property type="method" value="NMR"/>
    <property type="chains" value="A=2-135"/>
</dbReference>
<dbReference type="PDB" id="2A7U">
    <property type="method" value="NMR"/>
    <property type="chains" value="B=2-135"/>
</dbReference>
<dbReference type="PDB" id="5T4O">
    <property type="method" value="EM"/>
    <property type="resolution" value="6.90 A"/>
    <property type="chains" value="L=1-177"/>
</dbReference>
<dbReference type="PDB" id="5T4P">
    <property type="method" value="EM"/>
    <property type="resolution" value="7.77 A"/>
    <property type="chains" value="L=1-177"/>
</dbReference>
<dbReference type="PDB" id="5T4Q">
    <property type="method" value="EM"/>
    <property type="resolution" value="8.53 A"/>
    <property type="chains" value="L=1-177"/>
</dbReference>
<dbReference type="PDB" id="6OQR">
    <property type="method" value="EM"/>
    <property type="resolution" value="3.10 A"/>
    <property type="chains" value="W=1-177"/>
</dbReference>
<dbReference type="PDB" id="6OQS">
    <property type="method" value="EM"/>
    <property type="resolution" value="3.30 A"/>
    <property type="chains" value="W=1-177"/>
</dbReference>
<dbReference type="PDB" id="6OQT">
    <property type="method" value="EM"/>
    <property type="resolution" value="3.10 A"/>
    <property type="chains" value="W=1-177"/>
</dbReference>
<dbReference type="PDB" id="6OQU">
    <property type="method" value="EM"/>
    <property type="resolution" value="3.20 A"/>
    <property type="chains" value="W=1-177"/>
</dbReference>
<dbReference type="PDB" id="6OQV">
    <property type="method" value="EM"/>
    <property type="resolution" value="3.30 A"/>
    <property type="chains" value="W=1-177"/>
</dbReference>
<dbReference type="PDB" id="6OQW">
    <property type="method" value="EM"/>
    <property type="resolution" value="3.10 A"/>
    <property type="chains" value="W=1-177"/>
</dbReference>
<dbReference type="PDB" id="6PQV">
    <property type="method" value="EM"/>
    <property type="resolution" value="3.30 A"/>
    <property type="chains" value="W=1-177"/>
</dbReference>
<dbReference type="PDB" id="6WNQ">
    <property type="method" value="EM"/>
    <property type="resolution" value="3.40 A"/>
    <property type="chains" value="W=1-177"/>
</dbReference>
<dbReference type="PDB" id="6WNR">
    <property type="method" value="EM"/>
    <property type="resolution" value="3.30 A"/>
    <property type="chains" value="W=1-177"/>
</dbReference>
<dbReference type="PDB" id="8DBP">
    <property type="method" value="EM"/>
    <property type="resolution" value="3.60 A"/>
    <property type="chains" value="W=1-177"/>
</dbReference>
<dbReference type="PDB" id="8DBQ">
    <property type="method" value="EM"/>
    <property type="resolution" value="4.00 A"/>
    <property type="chains" value="W=3-175"/>
</dbReference>
<dbReference type="PDB" id="8DBR">
    <property type="method" value="EM"/>
    <property type="resolution" value="3.20 A"/>
    <property type="chains" value="W=1-177"/>
</dbReference>
<dbReference type="PDB" id="8DBS">
    <property type="method" value="EM"/>
    <property type="resolution" value="3.50 A"/>
    <property type="chains" value="W=3-175"/>
</dbReference>
<dbReference type="PDB" id="8DBT">
    <property type="method" value="EM"/>
    <property type="resolution" value="3.10 A"/>
    <property type="chains" value="W=1-177"/>
</dbReference>
<dbReference type="PDB" id="8DBU">
    <property type="method" value="EM"/>
    <property type="resolution" value="3.40 A"/>
    <property type="chains" value="W=1-177"/>
</dbReference>
<dbReference type="PDB" id="8DBV">
    <property type="method" value="EM"/>
    <property type="resolution" value="3.70 A"/>
    <property type="chains" value="W=1-177"/>
</dbReference>
<dbReference type="PDB" id="8DBW">
    <property type="method" value="EM"/>
    <property type="resolution" value="4.10 A"/>
    <property type="chains" value="W=3-175"/>
</dbReference>
<dbReference type="PDBsum" id="1ABV"/>
<dbReference type="PDBsum" id="2A7U"/>
<dbReference type="PDBsum" id="5T4O"/>
<dbReference type="PDBsum" id="5T4P"/>
<dbReference type="PDBsum" id="5T4Q"/>
<dbReference type="PDBsum" id="6OQR"/>
<dbReference type="PDBsum" id="6OQS"/>
<dbReference type="PDBsum" id="6OQT"/>
<dbReference type="PDBsum" id="6OQU"/>
<dbReference type="PDBsum" id="6OQV"/>
<dbReference type="PDBsum" id="6OQW"/>
<dbReference type="PDBsum" id="6PQV"/>
<dbReference type="PDBsum" id="6WNQ"/>
<dbReference type="PDBsum" id="6WNR"/>
<dbReference type="PDBsum" id="8DBP"/>
<dbReference type="PDBsum" id="8DBQ"/>
<dbReference type="PDBsum" id="8DBR"/>
<dbReference type="PDBsum" id="8DBS"/>
<dbReference type="PDBsum" id="8DBT"/>
<dbReference type="PDBsum" id="8DBU"/>
<dbReference type="PDBsum" id="8DBV"/>
<dbReference type="PDBsum" id="8DBW"/>
<dbReference type="SMR" id="P0ABA4"/>
<dbReference type="BioGRID" id="4262111">
    <property type="interactions" value="58"/>
</dbReference>
<dbReference type="BioGRID" id="852556">
    <property type="interactions" value="6"/>
</dbReference>
<dbReference type="ComplexPortal" id="CPX-4022">
    <property type="entry name" value="ATP synthase complex"/>
</dbReference>
<dbReference type="DIP" id="DIP-47921N"/>
<dbReference type="FunCoup" id="P0ABA4">
    <property type="interactions" value="562"/>
</dbReference>
<dbReference type="IntAct" id="P0ABA4">
    <property type="interactions" value="13"/>
</dbReference>
<dbReference type="STRING" id="511145.b3735"/>
<dbReference type="TCDB" id="3.A.2.1.1">
    <property type="family name" value="the h+- or na+-translocating f-type, v-type and a-type atpase (f-atpase) superfamily"/>
</dbReference>
<dbReference type="jPOST" id="P0ABA4"/>
<dbReference type="PaxDb" id="511145-b3735"/>
<dbReference type="EnsemblBacteria" id="AAC76758">
    <property type="protein sequence ID" value="AAC76758"/>
    <property type="gene ID" value="b3735"/>
</dbReference>
<dbReference type="GeneID" id="93778232"/>
<dbReference type="GeneID" id="948254"/>
<dbReference type="KEGG" id="ecj:JW3713"/>
<dbReference type="KEGG" id="eco:b3735"/>
<dbReference type="KEGG" id="ecoc:C3026_20240"/>
<dbReference type="PATRIC" id="fig|1411691.4.peg.2965"/>
<dbReference type="EchoBASE" id="EB0103"/>
<dbReference type="eggNOG" id="COG0712">
    <property type="taxonomic scope" value="Bacteria"/>
</dbReference>
<dbReference type="HOGENOM" id="CLU_085114_3_0_6"/>
<dbReference type="InParanoid" id="P0ABA4"/>
<dbReference type="OMA" id="MVDNIQD"/>
<dbReference type="OrthoDB" id="9816221at2"/>
<dbReference type="PhylomeDB" id="P0ABA4"/>
<dbReference type="BioCyc" id="EcoCyc:ATPH-MONOMER"/>
<dbReference type="BioCyc" id="MetaCyc:ATPH-MONOMER"/>
<dbReference type="EvolutionaryTrace" id="P0ABA4"/>
<dbReference type="PRO" id="PR:P0ABA4"/>
<dbReference type="Proteomes" id="UP000000625">
    <property type="component" value="Chromosome"/>
</dbReference>
<dbReference type="GO" id="GO:0005886">
    <property type="term" value="C:plasma membrane"/>
    <property type="evidence" value="ECO:0000303"/>
    <property type="project" value="ComplexPortal"/>
</dbReference>
<dbReference type="GO" id="GO:0045259">
    <property type="term" value="C:proton-transporting ATP synthase complex"/>
    <property type="evidence" value="ECO:0000353"/>
    <property type="project" value="ComplexPortal"/>
</dbReference>
<dbReference type="GO" id="GO:0046933">
    <property type="term" value="F:proton-transporting ATP synthase activity, rotational mechanism"/>
    <property type="evidence" value="ECO:0000315"/>
    <property type="project" value="EcoCyc"/>
</dbReference>
<dbReference type="GO" id="GO:0046961">
    <property type="term" value="F:proton-transporting ATPase activity, rotational mechanism"/>
    <property type="evidence" value="ECO:0000315"/>
    <property type="project" value="EcoCyc"/>
</dbReference>
<dbReference type="GO" id="GO:0015986">
    <property type="term" value="P:proton motive force-driven ATP synthesis"/>
    <property type="evidence" value="ECO:0000318"/>
    <property type="project" value="GO_Central"/>
</dbReference>
<dbReference type="GO" id="GO:0042777">
    <property type="term" value="P:proton motive force-driven plasma membrane ATP synthesis"/>
    <property type="evidence" value="ECO:0000315"/>
    <property type="project" value="ComplexPortal"/>
</dbReference>
<dbReference type="FunFam" id="1.10.520.20:FF:000001">
    <property type="entry name" value="ATP synthase subunit delta"/>
    <property type="match status" value="1"/>
</dbReference>
<dbReference type="Gene3D" id="1.10.520.20">
    <property type="entry name" value="N-terminal domain of the delta subunit of the F1F0-ATP synthase"/>
    <property type="match status" value="1"/>
</dbReference>
<dbReference type="HAMAP" id="MF_01416">
    <property type="entry name" value="ATP_synth_delta_bact"/>
    <property type="match status" value="1"/>
</dbReference>
<dbReference type="InterPro" id="IPR026015">
    <property type="entry name" value="ATP_synth_OSCP/delta_N_sf"/>
</dbReference>
<dbReference type="InterPro" id="IPR020781">
    <property type="entry name" value="ATPase_OSCP/d_CS"/>
</dbReference>
<dbReference type="InterPro" id="IPR000711">
    <property type="entry name" value="ATPase_OSCP/dsu"/>
</dbReference>
<dbReference type="NCBIfam" id="TIGR01145">
    <property type="entry name" value="ATP_synt_delta"/>
    <property type="match status" value="1"/>
</dbReference>
<dbReference type="NCBIfam" id="NF004402">
    <property type="entry name" value="PRK05758.2-2"/>
    <property type="match status" value="1"/>
</dbReference>
<dbReference type="NCBIfam" id="NF004404">
    <property type="entry name" value="PRK05758.2-5"/>
    <property type="match status" value="1"/>
</dbReference>
<dbReference type="PANTHER" id="PTHR11910">
    <property type="entry name" value="ATP SYNTHASE DELTA CHAIN"/>
    <property type="match status" value="1"/>
</dbReference>
<dbReference type="Pfam" id="PF00213">
    <property type="entry name" value="OSCP"/>
    <property type="match status" value="1"/>
</dbReference>
<dbReference type="PRINTS" id="PR00125">
    <property type="entry name" value="ATPASEDELTA"/>
</dbReference>
<dbReference type="SUPFAM" id="SSF47928">
    <property type="entry name" value="N-terminal domain of the delta subunit of the F1F0-ATP synthase"/>
    <property type="match status" value="1"/>
</dbReference>
<dbReference type="PROSITE" id="PS00389">
    <property type="entry name" value="ATPASE_DELTA"/>
    <property type="match status" value="1"/>
</dbReference>
<comment type="function">
    <text>F(1)F(0) ATP synthase produces ATP from ADP in the presence of a proton or sodium gradient. F-type ATPases consist of two structural domains, F(1) containing the extramembraneous catalytic core and F(0) containing the membrane proton channel, linked together by a central stalk and a peripheral stalk. During catalysis, ATP synthesis in the catalytic domain of F(1) is coupled via a rotary mechanism of the central stalk subunits to proton translocation.</text>
</comment>
<comment type="function">
    <text>This protein is part of the stalk that links CF(0) to CF(1). It either transmits conformational changes from CF(0) to CF(1) or is implicated in proton conduction.</text>
</comment>
<comment type="subunit">
    <text evidence="1 2">F-type ATPases have 2 components, F(1) - the catalytic core - and F(0) - the membrane proton channel. F(1) has five subunits: alpha(3), beta(3), gamma(1), delta(1), epsilon(1). F(0) has three main subunits: a(1), b(2) and c(10-14). The alpha and beta chains form an alternating ring which encloses part of the gamma chain. F(1) is attached to F(0) by a central stalk formed by the gamma and epsilon chains, while a peripheral stalk is formed by the delta and b chains.</text>
</comment>
<comment type="subcellular location">
    <subcellularLocation>
        <location evidence="1 2">Cell inner membrane</location>
        <topology evidence="1 2">Peripheral membrane protein</topology>
    </subcellularLocation>
</comment>
<comment type="similarity">
    <text evidence="1">Belongs to the ATPase delta chain family.</text>
</comment>
<name>ATPD_ECOLI</name>
<sequence length="177" mass="19332">MSEFITVARPYAKAAFDFAVEHQSVERWQDMLAFAAEVTKNEQMAELLSGALAPETLAESFIAVCGEQLDENGQNLIRVMAENGRLNALPDVLEQFIHLRAVSEATAEVDVISAAALSEQQLAKISAAMEKRLSRKVKLNCKIDKSVMAGVIIRAGDMVIDGSVRGRLERLADVLQS</sequence>
<feature type="chain" id="PRO_0000193462" description="ATP synthase subunit delta">
    <location>
        <begin position="1"/>
        <end position="177"/>
    </location>
</feature>
<feature type="sequence conflict" description="In Ref. 4; AAA20044." evidence="3" ref="4">
    <original>E</original>
    <variation>D</variation>
    <location>
        <position position="82"/>
    </location>
</feature>
<feature type="helix" evidence="4">
    <location>
        <begin position="5"/>
        <end position="21"/>
    </location>
</feature>
<feature type="helix" evidence="4">
    <location>
        <begin position="25"/>
        <end position="39"/>
    </location>
</feature>
<feature type="helix" evidence="4">
    <location>
        <begin position="42"/>
        <end position="47"/>
    </location>
</feature>
<feature type="helix" evidence="4">
    <location>
        <begin position="54"/>
        <end position="62"/>
    </location>
</feature>
<feature type="strand" evidence="4">
    <location>
        <begin position="66"/>
        <end position="68"/>
    </location>
</feature>
<feature type="helix" evidence="4">
    <location>
        <begin position="72"/>
        <end position="83"/>
    </location>
</feature>
<feature type="helix" evidence="4">
    <location>
        <begin position="86"/>
        <end position="88"/>
    </location>
</feature>
<feature type="helix" evidence="4">
    <location>
        <begin position="89"/>
        <end position="103"/>
    </location>
</feature>
<feature type="strand" evidence="4">
    <location>
        <begin position="110"/>
        <end position="115"/>
    </location>
</feature>
<feature type="helix" evidence="4">
    <location>
        <begin position="121"/>
        <end position="132"/>
    </location>
</feature>
<feature type="strand" evidence="4">
    <location>
        <begin position="133"/>
        <end position="137"/>
    </location>
</feature>
<feature type="strand" evidence="4">
    <location>
        <begin position="140"/>
        <end position="143"/>
    </location>
</feature>
<feature type="strand" evidence="4">
    <location>
        <begin position="145"/>
        <end position="147"/>
    </location>
</feature>
<feature type="strand" evidence="4">
    <location>
        <begin position="149"/>
        <end position="155"/>
    </location>
</feature>
<feature type="strand" evidence="4">
    <location>
        <begin position="158"/>
        <end position="161"/>
    </location>
</feature>
<feature type="helix" evidence="4">
    <location>
        <begin position="164"/>
        <end position="174"/>
    </location>
</feature>
<gene>
    <name evidence="1" type="primary">atpH</name>
    <name type="synonym">papE</name>
    <name type="synonym">uncH</name>
    <name type="ordered locus">b3735</name>
    <name type="ordered locus">JW3713</name>
</gene>
<reference key="1">
    <citation type="journal article" date="1984" name="Biochem. J.">
        <title>DNA sequence around the Escherichia coli unc operon. Completion of the sequence of a 17 kilobase segment containing asnA, oriC, unc, glmS and phoS.</title>
        <authorList>
            <person name="Walker J.E."/>
            <person name="Gay N.J."/>
            <person name="Saraste M."/>
            <person name="Eberle A.N."/>
        </authorList>
    </citation>
    <scope>NUCLEOTIDE SEQUENCE [GENOMIC DNA]</scope>
</reference>
<reference key="2">
    <citation type="journal article" date="1981" name="Nucleic Acids Res.">
        <title>The atp operon: nucleotide sequence of the promoter and the genes for the membrane proteins, and the delta subunit of Escherichia coli ATP-synthase.</title>
        <authorList>
            <person name="Gay N.J."/>
            <person name="Walker J.E."/>
        </authorList>
    </citation>
    <scope>NUCLEOTIDE SEQUENCE [GENOMIC DNA]</scope>
</reference>
<reference key="3">
    <citation type="journal article" date="1981" name="Mol. Gen. Genet.">
        <title>The nucleotide sequence of the atp genes coding for the F0 subunits a, b, c and the F1 subunit delta of the membrane bound ATP synthase of Escherichia coli.</title>
        <authorList>
            <person name="Nielsen J."/>
            <person name="Hansen F.G."/>
            <person name="Hoppe J."/>
            <person name="Friedl P."/>
            <person name="von Meyenburg K."/>
        </authorList>
    </citation>
    <scope>NUCLEOTIDE SEQUENCE [GENOMIC DNA]</scope>
</reference>
<reference key="4">
    <citation type="journal article" date="1981" name="Biochem. Biophys. Res. Commun.">
        <title>Nucleotide sequence of the gene coding for the delta subunit of proton translocating ATPase of Escherichia coli.</title>
        <authorList>
            <person name="Mabuchi K."/>
            <person name="Kanazawa H."/>
            <person name="Kayano T."/>
            <person name="Futai M."/>
        </authorList>
    </citation>
    <scope>NUCLEOTIDE SEQUENCE [GENOMIC DNA]</scope>
</reference>
<reference key="5">
    <citation type="journal article" date="1982" name="Ann. N. Y. Acad. Sci.">
        <title>Structure and function of H+-ATPase: what we have learned from Escherichia coli H+-ATPase.</title>
        <authorList>
            <person name="Kanazawa H."/>
            <person name="Futai M."/>
        </authorList>
    </citation>
    <scope>NUCLEOTIDE SEQUENCE [GENOMIC DNA]</scope>
</reference>
<reference key="6">
    <citation type="journal article" date="1993" name="Genomics">
        <title>DNA sequence and analysis of 136 kilobases of the Escherichia coli genome: organizational symmetry around the origin of replication.</title>
        <authorList>
            <person name="Burland V.D."/>
            <person name="Plunkett G. III"/>
            <person name="Daniels D.L."/>
            <person name="Blattner F.R."/>
        </authorList>
    </citation>
    <scope>NUCLEOTIDE SEQUENCE [LARGE SCALE GENOMIC DNA]</scope>
    <source>
        <strain>K12 / MG1655 / ATCC 47076</strain>
    </source>
</reference>
<reference key="7">
    <citation type="journal article" date="1997" name="Science">
        <title>The complete genome sequence of Escherichia coli K-12.</title>
        <authorList>
            <person name="Blattner F.R."/>
            <person name="Plunkett G. III"/>
            <person name="Bloch C.A."/>
            <person name="Perna N.T."/>
            <person name="Burland V."/>
            <person name="Riley M."/>
            <person name="Collado-Vides J."/>
            <person name="Glasner J.D."/>
            <person name="Rode C.K."/>
            <person name="Mayhew G.F."/>
            <person name="Gregor J."/>
            <person name="Davis N.W."/>
            <person name="Kirkpatrick H.A."/>
            <person name="Goeden M.A."/>
            <person name="Rose D.J."/>
            <person name="Mau B."/>
            <person name="Shao Y."/>
        </authorList>
    </citation>
    <scope>NUCLEOTIDE SEQUENCE [LARGE SCALE GENOMIC DNA]</scope>
    <source>
        <strain>K12 / MG1655 / ATCC 47076</strain>
    </source>
</reference>
<reference key="8">
    <citation type="journal article" date="2006" name="Mol. Syst. Biol.">
        <title>Highly accurate genome sequences of Escherichia coli K-12 strains MG1655 and W3110.</title>
        <authorList>
            <person name="Hayashi K."/>
            <person name="Morooka N."/>
            <person name="Yamamoto Y."/>
            <person name="Fujita K."/>
            <person name="Isono K."/>
            <person name="Choi S."/>
            <person name="Ohtsubo E."/>
            <person name="Baba T."/>
            <person name="Wanner B.L."/>
            <person name="Mori H."/>
            <person name="Horiuchi T."/>
        </authorList>
    </citation>
    <scope>NUCLEOTIDE SEQUENCE [LARGE SCALE GENOMIC DNA]</scope>
    <source>
        <strain>K12 / W3110 / ATCC 27325 / DSM 5911</strain>
    </source>
</reference>
<reference key="9">
    <citation type="journal article" date="2005" name="J. Biol. Chem.">
        <title>Protein complexes of the Escherichia coli cell envelope.</title>
        <authorList>
            <person name="Stenberg F."/>
            <person name="Chovanec P."/>
            <person name="Maslen S.L."/>
            <person name="Robinson C.V."/>
            <person name="Ilag L."/>
            <person name="von Heijne G."/>
            <person name="Daley D.O."/>
        </authorList>
    </citation>
    <scope>SUBUNIT</scope>
    <scope>SUBCELLULAR LOCATION</scope>
    <source>
        <strain>BL21-DE3</strain>
    </source>
</reference>
<reference key="10">
    <citation type="journal article" date="1997" name="Nat. Struct. Biol.">
        <title>Solution structure of the N-terminal domain of the delta subunit of the E. coli ATPsynthase.</title>
        <authorList>
            <person name="Wilkens S."/>
            <person name="Dunn S.D."/>
            <person name="Chandler J."/>
            <person name="Dahlquist F.W."/>
            <person name="Capaldi R.A."/>
        </authorList>
    </citation>
    <scope>STRUCTURE BY NMR OF 1-135</scope>
</reference>
<accession>P0ABA4</accession>
<accession>P00831</accession>
<accession>Q2M853</accession>
<evidence type="ECO:0000255" key="1">
    <source>
        <dbReference type="HAMAP-Rule" id="MF_01416"/>
    </source>
</evidence>
<evidence type="ECO:0000269" key="2">
    <source>
    </source>
</evidence>
<evidence type="ECO:0000305" key="3"/>
<evidence type="ECO:0007829" key="4">
    <source>
        <dbReference type="PDB" id="6OQR"/>
    </source>
</evidence>
<keyword id="KW-0002">3D-structure</keyword>
<keyword id="KW-0066">ATP synthesis</keyword>
<keyword id="KW-0997">Cell inner membrane</keyword>
<keyword id="KW-1003">Cell membrane</keyword>
<keyword id="KW-0139">CF(1)</keyword>
<keyword id="KW-0375">Hydrogen ion transport</keyword>
<keyword id="KW-0406">Ion transport</keyword>
<keyword id="KW-0472">Membrane</keyword>
<keyword id="KW-1185">Reference proteome</keyword>
<keyword id="KW-0813">Transport</keyword>
<organism>
    <name type="scientific">Escherichia coli (strain K12)</name>
    <dbReference type="NCBI Taxonomy" id="83333"/>
    <lineage>
        <taxon>Bacteria</taxon>
        <taxon>Pseudomonadati</taxon>
        <taxon>Pseudomonadota</taxon>
        <taxon>Gammaproteobacteria</taxon>
        <taxon>Enterobacterales</taxon>
        <taxon>Enterobacteriaceae</taxon>
        <taxon>Escherichia</taxon>
    </lineage>
</organism>